<proteinExistence type="inferred from homology"/>
<organism>
    <name type="scientific">Geobacillus kaustophilus (strain HTA426)</name>
    <dbReference type="NCBI Taxonomy" id="235909"/>
    <lineage>
        <taxon>Bacteria</taxon>
        <taxon>Bacillati</taxon>
        <taxon>Bacillota</taxon>
        <taxon>Bacilli</taxon>
        <taxon>Bacillales</taxon>
        <taxon>Anoxybacillaceae</taxon>
        <taxon>Geobacillus</taxon>
        <taxon>Geobacillus thermoleovorans group</taxon>
    </lineage>
</organism>
<comment type="function">
    <text evidence="1">Catalyzes the conversion of 1-hydroxy-2-methyl-2-(E)-butenyl 4-diphosphate (HMBPP) into a mixture of isopentenyl diphosphate (IPP) and dimethylallyl diphosphate (DMAPP). Acts in the terminal step of the DOXP/MEP pathway for isoprenoid precursor biosynthesis.</text>
</comment>
<comment type="catalytic activity">
    <reaction evidence="1">
        <text>isopentenyl diphosphate + 2 oxidized [2Fe-2S]-[ferredoxin] + H2O = (2E)-4-hydroxy-3-methylbut-2-enyl diphosphate + 2 reduced [2Fe-2S]-[ferredoxin] + 2 H(+)</text>
        <dbReference type="Rhea" id="RHEA:24488"/>
        <dbReference type="Rhea" id="RHEA-COMP:10000"/>
        <dbReference type="Rhea" id="RHEA-COMP:10001"/>
        <dbReference type="ChEBI" id="CHEBI:15377"/>
        <dbReference type="ChEBI" id="CHEBI:15378"/>
        <dbReference type="ChEBI" id="CHEBI:33737"/>
        <dbReference type="ChEBI" id="CHEBI:33738"/>
        <dbReference type="ChEBI" id="CHEBI:128753"/>
        <dbReference type="ChEBI" id="CHEBI:128769"/>
        <dbReference type="EC" id="1.17.7.4"/>
    </reaction>
</comment>
<comment type="catalytic activity">
    <reaction evidence="1">
        <text>dimethylallyl diphosphate + 2 oxidized [2Fe-2S]-[ferredoxin] + H2O = (2E)-4-hydroxy-3-methylbut-2-enyl diphosphate + 2 reduced [2Fe-2S]-[ferredoxin] + 2 H(+)</text>
        <dbReference type="Rhea" id="RHEA:24825"/>
        <dbReference type="Rhea" id="RHEA-COMP:10000"/>
        <dbReference type="Rhea" id="RHEA-COMP:10001"/>
        <dbReference type="ChEBI" id="CHEBI:15377"/>
        <dbReference type="ChEBI" id="CHEBI:15378"/>
        <dbReference type="ChEBI" id="CHEBI:33737"/>
        <dbReference type="ChEBI" id="CHEBI:33738"/>
        <dbReference type="ChEBI" id="CHEBI:57623"/>
        <dbReference type="ChEBI" id="CHEBI:128753"/>
        <dbReference type="EC" id="1.17.7.4"/>
    </reaction>
</comment>
<comment type="cofactor">
    <cofactor evidence="1">
        <name>[4Fe-4S] cluster</name>
        <dbReference type="ChEBI" id="CHEBI:49883"/>
    </cofactor>
    <text evidence="1">Binds 1 [4Fe-4S] cluster per subunit.</text>
</comment>
<comment type="pathway">
    <text evidence="1">Isoprenoid biosynthesis; dimethylallyl diphosphate biosynthesis; dimethylallyl diphosphate from (2E)-4-hydroxy-3-methylbutenyl diphosphate: step 1/1.</text>
</comment>
<comment type="pathway">
    <text evidence="1">Isoprenoid biosynthesis; isopentenyl diphosphate biosynthesis via DXP pathway; isopentenyl diphosphate from 1-deoxy-D-xylulose 5-phosphate: step 6/6.</text>
</comment>
<comment type="similarity">
    <text evidence="1">Belongs to the IspH family.</text>
</comment>
<name>ISPH_GEOKA</name>
<sequence length="316" mass="35311">MEVIKITPRGYCYGVVDAMVIARNAALDPSLPRPIYILGMIVHNKHVTDAFAEEGIITLDGENRLEILEKIDQGTVIFTAHGVSPEVKKRALEKGLVTIDATCPDVTKTHRLIEQKLADGYDIIYIGKKGHPEPEGAVGINPERIHLVETIDDVERLSIHNERIMVTNQTTMSQWDVADIMAKVKEKYPHVEMHKEICLATQLRQEAVAEQAKEADVTIVVGDPRSNNSNRLAQVSEEIAGTKAYRVADVTEIDINWIKDAKKVAVTAGASTPTPITKEVIDFLEQFDPNDPSTWKRERKVPLQKILPKVKTKKEE</sequence>
<accession>Q5KX24</accession>
<reference key="1">
    <citation type="journal article" date="2004" name="Nucleic Acids Res.">
        <title>Thermoadaptation trait revealed by the genome sequence of thermophilic Geobacillus kaustophilus.</title>
        <authorList>
            <person name="Takami H."/>
            <person name="Takaki Y."/>
            <person name="Chee G.-J."/>
            <person name="Nishi S."/>
            <person name="Shimamura S."/>
            <person name="Suzuki H."/>
            <person name="Matsui S."/>
            <person name="Uchiyama I."/>
        </authorList>
    </citation>
    <scope>NUCLEOTIDE SEQUENCE [LARGE SCALE GENOMIC DNA]</scope>
    <source>
        <strain>HTA426</strain>
    </source>
</reference>
<gene>
    <name evidence="1" type="primary">ispH</name>
    <name type="ordered locus">GK2477</name>
</gene>
<protein>
    <recommendedName>
        <fullName evidence="1">4-hydroxy-3-methylbut-2-enyl diphosphate reductase</fullName>
        <shortName evidence="1">HMBPP reductase</shortName>
        <ecNumber evidence="1">1.17.7.4</ecNumber>
    </recommendedName>
</protein>
<dbReference type="EC" id="1.17.7.4" evidence="1"/>
<dbReference type="EMBL" id="BA000043">
    <property type="protein sequence ID" value="BAD76762.1"/>
    <property type="molecule type" value="Genomic_DNA"/>
</dbReference>
<dbReference type="RefSeq" id="WP_011231957.1">
    <property type="nucleotide sequence ID" value="NC_006510.1"/>
</dbReference>
<dbReference type="SMR" id="Q5KX24"/>
<dbReference type="STRING" id="235909.GK2477"/>
<dbReference type="KEGG" id="gka:GK2477"/>
<dbReference type="eggNOG" id="COG0761">
    <property type="taxonomic scope" value="Bacteria"/>
</dbReference>
<dbReference type="HOGENOM" id="CLU_027486_0_0_9"/>
<dbReference type="UniPathway" id="UPA00056">
    <property type="reaction ID" value="UER00097"/>
</dbReference>
<dbReference type="UniPathway" id="UPA00059">
    <property type="reaction ID" value="UER00105"/>
</dbReference>
<dbReference type="Proteomes" id="UP000001172">
    <property type="component" value="Chromosome"/>
</dbReference>
<dbReference type="GO" id="GO:0051539">
    <property type="term" value="F:4 iron, 4 sulfur cluster binding"/>
    <property type="evidence" value="ECO:0007669"/>
    <property type="project" value="UniProtKB-UniRule"/>
</dbReference>
<dbReference type="GO" id="GO:0051745">
    <property type="term" value="F:4-hydroxy-3-methylbut-2-enyl diphosphate reductase activity"/>
    <property type="evidence" value="ECO:0007669"/>
    <property type="project" value="UniProtKB-UniRule"/>
</dbReference>
<dbReference type="GO" id="GO:0046872">
    <property type="term" value="F:metal ion binding"/>
    <property type="evidence" value="ECO:0007669"/>
    <property type="project" value="UniProtKB-KW"/>
</dbReference>
<dbReference type="GO" id="GO:0050992">
    <property type="term" value="P:dimethylallyl diphosphate biosynthetic process"/>
    <property type="evidence" value="ECO:0007669"/>
    <property type="project" value="UniProtKB-UniRule"/>
</dbReference>
<dbReference type="GO" id="GO:0019288">
    <property type="term" value="P:isopentenyl diphosphate biosynthetic process, methylerythritol 4-phosphate pathway"/>
    <property type="evidence" value="ECO:0007669"/>
    <property type="project" value="UniProtKB-UniRule"/>
</dbReference>
<dbReference type="GO" id="GO:0016114">
    <property type="term" value="P:terpenoid biosynthetic process"/>
    <property type="evidence" value="ECO:0007669"/>
    <property type="project" value="UniProtKB-UniRule"/>
</dbReference>
<dbReference type="CDD" id="cd13944">
    <property type="entry name" value="lytB_ispH"/>
    <property type="match status" value="1"/>
</dbReference>
<dbReference type="Gene3D" id="3.40.50.11270">
    <property type="match status" value="1"/>
</dbReference>
<dbReference type="Gene3D" id="3.40.1010.20">
    <property type="entry name" value="4-hydroxy-3-methylbut-2-enyl diphosphate reductase, catalytic domain"/>
    <property type="match status" value="2"/>
</dbReference>
<dbReference type="HAMAP" id="MF_00191">
    <property type="entry name" value="IspH"/>
    <property type="match status" value="1"/>
</dbReference>
<dbReference type="InterPro" id="IPR003451">
    <property type="entry name" value="LytB/IspH"/>
</dbReference>
<dbReference type="NCBIfam" id="TIGR00216">
    <property type="entry name" value="ispH_lytB"/>
    <property type="match status" value="1"/>
</dbReference>
<dbReference type="NCBIfam" id="NF002187">
    <property type="entry name" value="PRK01045.1-1"/>
    <property type="match status" value="1"/>
</dbReference>
<dbReference type="PANTHER" id="PTHR30426">
    <property type="entry name" value="4-HYDROXY-3-METHYLBUT-2-ENYL DIPHOSPHATE REDUCTASE"/>
    <property type="match status" value="1"/>
</dbReference>
<dbReference type="PANTHER" id="PTHR30426:SF0">
    <property type="entry name" value="4-HYDROXY-3-METHYLBUT-2-ENYL DIPHOSPHATE REDUCTASE"/>
    <property type="match status" value="1"/>
</dbReference>
<dbReference type="Pfam" id="PF02401">
    <property type="entry name" value="LYTB"/>
    <property type="match status" value="1"/>
</dbReference>
<feature type="chain" id="PRO_0000128819" description="4-hydroxy-3-methylbut-2-enyl diphosphate reductase">
    <location>
        <begin position="1"/>
        <end position="316"/>
    </location>
</feature>
<feature type="active site" description="Proton donor" evidence="1">
    <location>
        <position position="133"/>
    </location>
</feature>
<feature type="binding site" evidence="1">
    <location>
        <position position="12"/>
    </location>
    <ligand>
        <name>[4Fe-4S] cluster</name>
        <dbReference type="ChEBI" id="CHEBI:49883"/>
    </ligand>
</feature>
<feature type="binding site" evidence="1">
    <location>
        <position position="43"/>
    </location>
    <ligand>
        <name>(2E)-4-hydroxy-3-methylbut-2-enyl diphosphate</name>
        <dbReference type="ChEBI" id="CHEBI:128753"/>
    </ligand>
</feature>
<feature type="binding site" evidence="1">
    <location>
        <position position="43"/>
    </location>
    <ligand>
        <name>dimethylallyl diphosphate</name>
        <dbReference type="ChEBI" id="CHEBI:57623"/>
    </ligand>
</feature>
<feature type="binding site" evidence="1">
    <location>
        <position position="43"/>
    </location>
    <ligand>
        <name>isopentenyl diphosphate</name>
        <dbReference type="ChEBI" id="CHEBI:128769"/>
    </ligand>
</feature>
<feature type="binding site" evidence="1">
    <location>
        <position position="81"/>
    </location>
    <ligand>
        <name>(2E)-4-hydroxy-3-methylbut-2-enyl diphosphate</name>
        <dbReference type="ChEBI" id="CHEBI:128753"/>
    </ligand>
</feature>
<feature type="binding site" evidence="1">
    <location>
        <position position="81"/>
    </location>
    <ligand>
        <name>dimethylallyl diphosphate</name>
        <dbReference type="ChEBI" id="CHEBI:57623"/>
    </ligand>
</feature>
<feature type="binding site" evidence="1">
    <location>
        <position position="81"/>
    </location>
    <ligand>
        <name>isopentenyl diphosphate</name>
        <dbReference type="ChEBI" id="CHEBI:128769"/>
    </ligand>
</feature>
<feature type="binding site" evidence="1">
    <location>
        <position position="103"/>
    </location>
    <ligand>
        <name>[4Fe-4S] cluster</name>
        <dbReference type="ChEBI" id="CHEBI:49883"/>
    </ligand>
</feature>
<feature type="binding site" evidence="1">
    <location>
        <position position="131"/>
    </location>
    <ligand>
        <name>(2E)-4-hydroxy-3-methylbut-2-enyl diphosphate</name>
        <dbReference type="ChEBI" id="CHEBI:128753"/>
    </ligand>
</feature>
<feature type="binding site" evidence="1">
    <location>
        <position position="131"/>
    </location>
    <ligand>
        <name>dimethylallyl diphosphate</name>
        <dbReference type="ChEBI" id="CHEBI:57623"/>
    </ligand>
</feature>
<feature type="binding site" evidence="1">
    <location>
        <position position="131"/>
    </location>
    <ligand>
        <name>isopentenyl diphosphate</name>
        <dbReference type="ChEBI" id="CHEBI:128769"/>
    </ligand>
</feature>
<feature type="binding site" evidence="1">
    <location>
        <position position="170"/>
    </location>
    <ligand>
        <name>(2E)-4-hydroxy-3-methylbut-2-enyl diphosphate</name>
        <dbReference type="ChEBI" id="CHEBI:128753"/>
    </ligand>
</feature>
<feature type="binding site" evidence="1">
    <location>
        <position position="198"/>
    </location>
    <ligand>
        <name>[4Fe-4S] cluster</name>
        <dbReference type="ChEBI" id="CHEBI:49883"/>
    </ligand>
</feature>
<feature type="binding site" evidence="1">
    <location>
        <position position="226"/>
    </location>
    <ligand>
        <name>(2E)-4-hydroxy-3-methylbut-2-enyl diphosphate</name>
        <dbReference type="ChEBI" id="CHEBI:128753"/>
    </ligand>
</feature>
<feature type="binding site" evidence="1">
    <location>
        <position position="226"/>
    </location>
    <ligand>
        <name>dimethylallyl diphosphate</name>
        <dbReference type="ChEBI" id="CHEBI:57623"/>
    </ligand>
</feature>
<feature type="binding site" evidence="1">
    <location>
        <position position="226"/>
    </location>
    <ligand>
        <name>isopentenyl diphosphate</name>
        <dbReference type="ChEBI" id="CHEBI:128769"/>
    </ligand>
</feature>
<feature type="binding site" evidence="1">
    <location>
        <position position="228"/>
    </location>
    <ligand>
        <name>(2E)-4-hydroxy-3-methylbut-2-enyl diphosphate</name>
        <dbReference type="ChEBI" id="CHEBI:128753"/>
    </ligand>
</feature>
<feature type="binding site" evidence="1">
    <location>
        <position position="228"/>
    </location>
    <ligand>
        <name>dimethylallyl diphosphate</name>
        <dbReference type="ChEBI" id="CHEBI:57623"/>
    </ligand>
</feature>
<feature type="binding site" evidence="1">
    <location>
        <position position="228"/>
    </location>
    <ligand>
        <name>isopentenyl diphosphate</name>
        <dbReference type="ChEBI" id="CHEBI:128769"/>
    </ligand>
</feature>
<feature type="binding site" evidence="1">
    <location>
        <position position="271"/>
    </location>
    <ligand>
        <name>(2E)-4-hydroxy-3-methylbut-2-enyl diphosphate</name>
        <dbReference type="ChEBI" id="CHEBI:128753"/>
    </ligand>
</feature>
<feature type="binding site" evidence="1">
    <location>
        <position position="271"/>
    </location>
    <ligand>
        <name>dimethylallyl diphosphate</name>
        <dbReference type="ChEBI" id="CHEBI:57623"/>
    </ligand>
</feature>
<feature type="binding site" evidence="1">
    <location>
        <position position="271"/>
    </location>
    <ligand>
        <name>isopentenyl diphosphate</name>
        <dbReference type="ChEBI" id="CHEBI:128769"/>
    </ligand>
</feature>
<keyword id="KW-0004">4Fe-4S</keyword>
<keyword id="KW-0408">Iron</keyword>
<keyword id="KW-0411">Iron-sulfur</keyword>
<keyword id="KW-0414">Isoprene biosynthesis</keyword>
<keyword id="KW-0479">Metal-binding</keyword>
<keyword id="KW-0560">Oxidoreductase</keyword>
<keyword id="KW-1185">Reference proteome</keyword>
<evidence type="ECO:0000255" key="1">
    <source>
        <dbReference type="HAMAP-Rule" id="MF_00191"/>
    </source>
</evidence>